<reference key="1">
    <citation type="submission" date="1997-06" db="EMBL/GenBank/DDBJ databases">
        <authorList>
            <person name="Whitehouse C.A."/>
            <person name="Austin F.E."/>
        </authorList>
    </citation>
    <scope>NUCLEOTIDE SEQUENCE [GENOMIC DNA]</scope>
    <source>
        <strain>Sh-2-82</strain>
    </source>
</reference>
<reference key="2">
    <citation type="journal article" date="1997" name="Nature">
        <title>Genomic sequence of a Lyme disease spirochaete, Borrelia burgdorferi.</title>
        <authorList>
            <person name="Fraser C.M."/>
            <person name="Casjens S."/>
            <person name="Huang W.M."/>
            <person name="Sutton G.G."/>
            <person name="Clayton R.A."/>
            <person name="Lathigra R."/>
            <person name="White O."/>
            <person name="Ketchum K.A."/>
            <person name="Dodson R.J."/>
            <person name="Hickey E.K."/>
            <person name="Gwinn M.L."/>
            <person name="Dougherty B.A."/>
            <person name="Tomb J.-F."/>
            <person name="Fleischmann R.D."/>
            <person name="Richardson D.L."/>
            <person name="Peterson J.D."/>
            <person name="Kerlavage A.R."/>
            <person name="Quackenbush J."/>
            <person name="Salzberg S.L."/>
            <person name="Hanson M."/>
            <person name="van Vugt R."/>
            <person name="Palmer N."/>
            <person name="Adams M.D."/>
            <person name="Gocayne J.D."/>
            <person name="Weidman J.F."/>
            <person name="Utterback T.R."/>
            <person name="Watthey L."/>
            <person name="McDonald L.A."/>
            <person name="Artiach P."/>
            <person name="Bowman C."/>
            <person name="Garland S.A."/>
            <person name="Fujii C."/>
            <person name="Cotton M.D."/>
            <person name="Horst K."/>
            <person name="Roberts K.M."/>
            <person name="Hatch B."/>
            <person name="Smith H.O."/>
            <person name="Venter J.C."/>
        </authorList>
    </citation>
    <scope>NUCLEOTIDE SEQUENCE [LARGE SCALE GENOMIC DNA]</scope>
    <source>
        <strain>ATCC 35210 / DSM 4680 / CIP 102532 / B31</strain>
    </source>
</reference>
<proteinExistence type="evidence at protein level"/>
<feature type="chain" id="PRO_0000160137" description="Glucosamine-6-phosphate deaminase">
    <location>
        <begin position="1"/>
        <end position="268"/>
    </location>
</feature>
<feature type="active site" description="Proton acceptor; for enolization step" evidence="1">
    <location>
        <position position="72"/>
    </location>
</feature>
<feature type="active site" description="For ring-opening step" evidence="1">
    <location>
        <position position="141"/>
    </location>
</feature>
<feature type="active site" description="Proton acceptor; for ring-opening step" evidence="1">
    <location>
        <position position="143"/>
    </location>
</feature>
<feature type="active site" description="For ring-opening step" evidence="1">
    <location>
        <position position="148"/>
    </location>
</feature>
<feature type="site" description="Part of the allosteric site" evidence="1">
    <location>
        <position position="151"/>
    </location>
</feature>
<feature type="site" description="Part of the allosteric site" evidence="1">
    <location>
        <position position="158"/>
    </location>
</feature>
<feature type="site" description="Part of the allosteric site" evidence="1">
    <location>
        <position position="160"/>
    </location>
</feature>
<feature type="site" description="Part of the allosteric site" evidence="1">
    <location>
        <position position="161"/>
    </location>
</feature>
<feature type="site" description="Part of the allosteric site" evidence="1">
    <location>
        <position position="254"/>
    </location>
</feature>
<feature type="strand" evidence="3">
    <location>
        <begin position="2"/>
        <end position="8"/>
    </location>
</feature>
<feature type="helix" evidence="3">
    <location>
        <begin position="9"/>
        <end position="27"/>
    </location>
</feature>
<feature type="strand" evidence="3">
    <location>
        <begin position="35"/>
        <end position="39"/>
    </location>
</feature>
<feature type="helix" evidence="3">
    <location>
        <begin position="46"/>
        <end position="57"/>
    </location>
</feature>
<feature type="strand" evidence="3">
    <location>
        <begin position="66"/>
        <end position="76"/>
    </location>
</feature>
<feature type="helix" evidence="3">
    <location>
        <begin position="85"/>
        <end position="92"/>
    </location>
</feature>
<feature type="helix" evidence="3">
    <location>
        <begin position="94"/>
        <end position="96"/>
    </location>
</feature>
<feature type="helix" evidence="3">
    <location>
        <begin position="101"/>
        <end position="103"/>
    </location>
</feature>
<feature type="helix" evidence="3">
    <location>
        <begin position="114"/>
        <end position="127"/>
    </location>
</feature>
<feature type="strand" evidence="3">
    <location>
        <begin position="132"/>
        <end position="137"/>
    </location>
</feature>
<feature type="strand" evidence="3">
    <location>
        <begin position="157"/>
        <end position="161"/>
    </location>
</feature>
<feature type="helix" evidence="3">
    <location>
        <begin position="164"/>
        <end position="170"/>
    </location>
</feature>
<feature type="helix" evidence="3">
    <location>
        <begin position="171"/>
        <end position="173"/>
    </location>
</feature>
<feature type="turn" evidence="3">
    <location>
        <begin position="174"/>
        <end position="176"/>
    </location>
</feature>
<feature type="turn" evidence="3">
    <location>
        <begin position="178"/>
        <end position="180"/>
    </location>
</feature>
<feature type="strand" evidence="3">
    <location>
        <begin position="183"/>
        <end position="187"/>
    </location>
</feature>
<feature type="helix" evidence="3">
    <location>
        <begin position="190"/>
        <end position="194"/>
    </location>
</feature>
<feature type="strand" evidence="3">
    <location>
        <begin position="199"/>
        <end position="203"/>
    </location>
</feature>
<feature type="helix" evidence="3">
    <location>
        <begin position="206"/>
        <end position="208"/>
    </location>
</feature>
<feature type="helix" evidence="3">
    <location>
        <begin position="209"/>
        <end position="216"/>
    </location>
</feature>
<feature type="helix" evidence="3">
    <location>
        <begin position="225"/>
        <end position="231"/>
    </location>
</feature>
<feature type="strand" evidence="3">
    <location>
        <begin position="233"/>
        <end position="241"/>
    </location>
</feature>
<feature type="helix" evidence="3">
    <location>
        <begin position="242"/>
        <end position="244"/>
    </location>
</feature>
<feature type="helix" evidence="3">
    <location>
        <begin position="249"/>
        <end position="263"/>
    </location>
</feature>
<protein>
    <recommendedName>
        <fullName>Glucosamine-6-phosphate deaminase</fullName>
        <ecNumber>3.5.99.6</ecNumber>
    </recommendedName>
    <alternativeName>
        <fullName>GlcN6P deaminase</fullName>
        <shortName>GNPDA</shortName>
    </alternativeName>
    <alternativeName>
        <fullName>Glucosamine-6-phosphate isomerase</fullName>
    </alternativeName>
</protein>
<organism>
    <name type="scientific">Borreliella burgdorferi (strain ATCC 35210 / DSM 4680 / CIP 102532 / B31)</name>
    <name type="common">Borrelia burgdorferi</name>
    <dbReference type="NCBI Taxonomy" id="224326"/>
    <lineage>
        <taxon>Bacteria</taxon>
        <taxon>Pseudomonadati</taxon>
        <taxon>Spirochaetota</taxon>
        <taxon>Spirochaetia</taxon>
        <taxon>Spirochaetales</taxon>
        <taxon>Borreliaceae</taxon>
        <taxon>Borreliella</taxon>
    </lineage>
</organism>
<keyword id="KW-0002">3D-structure</keyword>
<keyword id="KW-0021">Allosteric enzyme</keyword>
<keyword id="KW-0119">Carbohydrate metabolism</keyword>
<keyword id="KW-0378">Hydrolase</keyword>
<keyword id="KW-1185">Reference proteome</keyword>
<accession>O30564</accession>
<sequence>MRLIIRPTYEDISKWAANHVAQKINEFSPTKENPFILGLPTGSSPIGMYKNLIELNKNKKISFQNVITFNMDEYIGIEENHPESYHSFMWNNFFSHIDIKKENINILNGNASNLKKECEEYEKKIKSFGGIMLFVGGIGPDGHIAFNEPGSSLTSRTRIKTLTQDTIIANSRFFEGDVNKVPKNALTVGIGTIMDSQEVLIIVNGHNKARALKHAIEKGVNHMWTISALQLHKNAIIVSDKNATYELKVGTVEYFNDIERKNFNNDLK</sequence>
<dbReference type="EC" id="3.5.99.6"/>
<dbReference type="EMBL" id="AF011226">
    <property type="protein sequence ID" value="AAB65253.1"/>
    <property type="molecule type" value="Genomic_DNA"/>
</dbReference>
<dbReference type="EMBL" id="AE000783">
    <property type="protein sequence ID" value="AAC66538.1"/>
    <property type="molecule type" value="Genomic_DNA"/>
</dbReference>
<dbReference type="PIR" id="H70118">
    <property type="entry name" value="H70118"/>
</dbReference>
<dbReference type="RefSeq" id="NP_212286.1">
    <property type="nucleotide sequence ID" value="NC_001318.1"/>
</dbReference>
<dbReference type="RefSeq" id="WP_002556751.1">
    <property type="nucleotide sequence ID" value="NC_001318.1"/>
</dbReference>
<dbReference type="PDB" id="3HN6">
    <property type="method" value="X-ray"/>
    <property type="resolution" value="2.20 A"/>
    <property type="chains" value="A/B/C/D/E/F=1-268"/>
</dbReference>
<dbReference type="PDBsum" id="3HN6"/>
<dbReference type="SMR" id="O30564"/>
<dbReference type="STRING" id="224326.BB_0152"/>
<dbReference type="PaxDb" id="224326-BB_0152"/>
<dbReference type="EnsemblBacteria" id="AAC66538">
    <property type="protein sequence ID" value="AAC66538"/>
    <property type="gene ID" value="BB_0152"/>
</dbReference>
<dbReference type="GeneID" id="56568068"/>
<dbReference type="KEGG" id="bbu:BB_0152"/>
<dbReference type="PATRIC" id="fig|224326.49.peg.549"/>
<dbReference type="HOGENOM" id="CLU_049611_0_1_12"/>
<dbReference type="OrthoDB" id="9791139at2"/>
<dbReference type="UniPathway" id="UPA00629">
    <property type="reaction ID" value="UER00684"/>
</dbReference>
<dbReference type="EvolutionaryTrace" id="O30564"/>
<dbReference type="Proteomes" id="UP000001807">
    <property type="component" value="Chromosome"/>
</dbReference>
<dbReference type="GO" id="GO:0005829">
    <property type="term" value="C:cytosol"/>
    <property type="evidence" value="ECO:0000314"/>
    <property type="project" value="CAFA"/>
</dbReference>
<dbReference type="GO" id="GO:0004342">
    <property type="term" value="F:glucosamine-6-phosphate deaminase activity"/>
    <property type="evidence" value="ECO:0007669"/>
    <property type="project" value="UniProtKB-UniRule"/>
</dbReference>
<dbReference type="GO" id="GO:0042802">
    <property type="term" value="F:identical protein binding"/>
    <property type="evidence" value="ECO:0007669"/>
    <property type="project" value="TreeGrafter"/>
</dbReference>
<dbReference type="GO" id="GO:0005975">
    <property type="term" value="P:carbohydrate metabolic process"/>
    <property type="evidence" value="ECO:0007669"/>
    <property type="project" value="InterPro"/>
</dbReference>
<dbReference type="GO" id="GO:0006043">
    <property type="term" value="P:glucosamine catabolic process"/>
    <property type="evidence" value="ECO:0007669"/>
    <property type="project" value="TreeGrafter"/>
</dbReference>
<dbReference type="GO" id="GO:0006046">
    <property type="term" value="P:N-acetylglucosamine catabolic process"/>
    <property type="evidence" value="ECO:0007669"/>
    <property type="project" value="TreeGrafter"/>
</dbReference>
<dbReference type="GO" id="GO:0019262">
    <property type="term" value="P:N-acetylneuraminate catabolic process"/>
    <property type="evidence" value="ECO:0007669"/>
    <property type="project" value="UniProtKB-UniRule"/>
</dbReference>
<dbReference type="CDD" id="cd01399">
    <property type="entry name" value="GlcN6P_deaminase"/>
    <property type="match status" value="1"/>
</dbReference>
<dbReference type="FunFam" id="3.40.50.1360:FF:000002">
    <property type="entry name" value="Glucosamine-6-phosphate deaminase"/>
    <property type="match status" value="1"/>
</dbReference>
<dbReference type="Gene3D" id="3.40.50.1360">
    <property type="match status" value="1"/>
</dbReference>
<dbReference type="HAMAP" id="MF_01241">
    <property type="entry name" value="GlcN6P_deamin"/>
    <property type="match status" value="1"/>
</dbReference>
<dbReference type="InterPro" id="IPR006148">
    <property type="entry name" value="Glc/Gal-6P_isomerase"/>
</dbReference>
<dbReference type="InterPro" id="IPR004547">
    <property type="entry name" value="Glucosamine6P_isomerase"/>
</dbReference>
<dbReference type="InterPro" id="IPR018321">
    <property type="entry name" value="Glucosamine6P_isomerase_CS"/>
</dbReference>
<dbReference type="InterPro" id="IPR037171">
    <property type="entry name" value="NagB/RpiA_transferase-like"/>
</dbReference>
<dbReference type="NCBIfam" id="TIGR00502">
    <property type="entry name" value="nagB"/>
    <property type="match status" value="1"/>
</dbReference>
<dbReference type="PANTHER" id="PTHR11280">
    <property type="entry name" value="GLUCOSAMINE-6-PHOSPHATE ISOMERASE"/>
    <property type="match status" value="1"/>
</dbReference>
<dbReference type="PANTHER" id="PTHR11280:SF5">
    <property type="entry name" value="GLUCOSAMINE-6-PHOSPHATE ISOMERASE"/>
    <property type="match status" value="1"/>
</dbReference>
<dbReference type="Pfam" id="PF01182">
    <property type="entry name" value="Glucosamine_iso"/>
    <property type="match status" value="1"/>
</dbReference>
<dbReference type="SUPFAM" id="SSF100950">
    <property type="entry name" value="NagB/RpiA/CoA transferase-like"/>
    <property type="match status" value="1"/>
</dbReference>
<dbReference type="PROSITE" id="PS01161">
    <property type="entry name" value="GLC_GALNAC_ISOMERASE"/>
    <property type="match status" value="1"/>
</dbReference>
<gene>
    <name type="primary">nagB</name>
    <name type="ordered locus">BB_0152</name>
</gene>
<comment type="function">
    <text evidence="1">Catalyzes the reversible isomerization-deamination of glucosamine 6-phosphate (GlcN6P) to form fructose 6-phosphate (Fru6P) and ammonium ion.</text>
</comment>
<comment type="catalytic activity">
    <reaction>
        <text>alpha-D-glucosamine 6-phosphate + H2O = beta-D-fructose 6-phosphate + NH4(+)</text>
        <dbReference type="Rhea" id="RHEA:12172"/>
        <dbReference type="ChEBI" id="CHEBI:15377"/>
        <dbReference type="ChEBI" id="CHEBI:28938"/>
        <dbReference type="ChEBI" id="CHEBI:57634"/>
        <dbReference type="ChEBI" id="CHEBI:75989"/>
        <dbReference type="EC" id="3.5.99.6"/>
    </reaction>
</comment>
<comment type="activity regulation">
    <text evidence="1">Allosterically activated by N-acetylglucosamine 6-phosphate (GlcNAc6P).</text>
</comment>
<comment type="pathway">
    <text>Amino-sugar metabolism; N-acetylneuraminate degradation; D-fructose 6-phosphate from N-acetylneuraminate: step 5/5.</text>
</comment>
<comment type="similarity">
    <text evidence="2">Belongs to the glucosamine/galactosamine-6-phosphate isomerase family. NagB subfamily.</text>
</comment>
<evidence type="ECO:0000250" key="1"/>
<evidence type="ECO:0000305" key="2"/>
<evidence type="ECO:0007829" key="3">
    <source>
        <dbReference type="PDB" id="3HN6"/>
    </source>
</evidence>
<name>NAGB_BORBU</name>